<proteinExistence type="evidence at protein level"/>
<reference key="1">
    <citation type="journal article" date="2004" name="Nature">
        <title>Genome sequence of the Brown Norway rat yields insights into mammalian evolution.</title>
        <authorList>
            <person name="Gibbs R.A."/>
            <person name="Weinstock G.M."/>
            <person name="Metzker M.L."/>
            <person name="Muzny D.M."/>
            <person name="Sodergren E.J."/>
            <person name="Scherer S."/>
            <person name="Scott G."/>
            <person name="Steffen D."/>
            <person name="Worley K.C."/>
            <person name="Burch P.E."/>
            <person name="Okwuonu G."/>
            <person name="Hines S."/>
            <person name="Lewis L."/>
            <person name="Deramo C."/>
            <person name="Delgado O."/>
            <person name="Dugan-Rocha S."/>
            <person name="Miner G."/>
            <person name="Morgan M."/>
            <person name="Hawes A."/>
            <person name="Gill R."/>
            <person name="Holt R.A."/>
            <person name="Adams M.D."/>
            <person name="Amanatides P.G."/>
            <person name="Baden-Tillson H."/>
            <person name="Barnstead M."/>
            <person name="Chin S."/>
            <person name="Evans C.A."/>
            <person name="Ferriera S."/>
            <person name="Fosler C."/>
            <person name="Glodek A."/>
            <person name="Gu Z."/>
            <person name="Jennings D."/>
            <person name="Kraft C.L."/>
            <person name="Nguyen T."/>
            <person name="Pfannkoch C.M."/>
            <person name="Sitter C."/>
            <person name="Sutton G.G."/>
            <person name="Venter J.C."/>
            <person name="Woodage T."/>
            <person name="Smith D."/>
            <person name="Lee H.-M."/>
            <person name="Gustafson E."/>
            <person name="Cahill P."/>
            <person name="Kana A."/>
            <person name="Doucette-Stamm L."/>
            <person name="Weinstock K."/>
            <person name="Fechtel K."/>
            <person name="Weiss R.B."/>
            <person name="Dunn D.M."/>
            <person name="Green E.D."/>
            <person name="Blakesley R.W."/>
            <person name="Bouffard G.G."/>
            <person name="De Jong P.J."/>
            <person name="Osoegawa K."/>
            <person name="Zhu B."/>
            <person name="Marra M."/>
            <person name="Schein J."/>
            <person name="Bosdet I."/>
            <person name="Fjell C."/>
            <person name="Jones S."/>
            <person name="Krzywinski M."/>
            <person name="Mathewson C."/>
            <person name="Siddiqui A."/>
            <person name="Wye N."/>
            <person name="McPherson J."/>
            <person name="Zhao S."/>
            <person name="Fraser C.M."/>
            <person name="Shetty J."/>
            <person name="Shatsman S."/>
            <person name="Geer K."/>
            <person name="Chen Y."/>
            <person name="Abramzon S."/>
            <person name="Nierman W.C."/>
            <person name="Havlak P.H."/>
            <person name="Chen R."/>
            <person name="Durbin K.J."/>
            <person name="Egan A."/>
            <person name="Ren Y."/>
            <person name="Song X.-Z."/>
            <person name="Li B."/>
            <person name="Liu Y."/>
            <person name="Qin X."/>
            <person name="Cawley S."/>
            <person name="Cooney A.J."/>
            <person name="D'Souza L.M."/>
            <person name="Martin K."/>
            <person name="Wu J.Q."/>
            <person name="Gonzalez-Garay M.L."/>
            <person name="Jackson A.R."/>
            <person name="Kalafus K.J."/>
            <person name="McLeod M.P."/>
            <person name="Milosavljevic A."/>
            <person name="Virk D."/>
            <person name="Volkov A."/>
            <person name="Wheeler D.A."/>
            <person name="Zhang Z."/>
            <person name="Bailey J.A."/>
            <person name="Eichler E.E."/>
            <person name="Tuzun E."/>
            <person name="Birney E."/>
            <person name="Mongin E."/>
            <person name="Ureta-Vidal A."/>
            <person name="Woodwark C."/>
            <person name="Zdobnov E."/>
            <person name="Bork P."/>
            <person name="Suyama M."/>
            <person name="Torrents D."/>
            <person name="Alexandersson M."/>
            <person name="Trask B.J."/>
            <person name="Young J.M."/>
            <person name="Huang H."/>
            <person name="Wang H."/>
            <person name="Xing H."/>
            <person name="Daniels S."/>
            <person name="Gietzen D."/>
            <person name="Schmidt J."/>
            <person name="Stevens K."/>
            <person name="Vitt U."/>
            <person name="Wingrove J."/>
            <person name="Camara F."/>
            <person name="Mar Alba M."/>
            <person name="Abril J.F."/>
            <person name="Guigo R."/>
            <person name="Smit A."/>
            <person name="Dubchak I."/>
            <person name="Rubin E.M."/>
            <person name="Couronne O."/>
            <person name="Poliakov A."/>
            <person name="Huebner N."/>
            <person name="Ganten D."/>
            <person name="Goesele C."/>
            <person name="Hummel O."/>
            <person name="Kreitler T."/>
            <person name="Lee Y.-A."/>
            <person name="Monti J."/>
            <person name="Schulz H."/>
            <person name="Zimdahl H."/>
            <person name="Himmelbauer H."/>
            <person name="Lehrach H."/>
            <person name="Jacob H.J."/>
            <person name="Bromberg S."/>
            <person name="Gullings-Handley J."/>
            <person name="Jensen-Seaman M.I."/>
            <person name="Kwitek A.E."/>
            <person name="Lazar J."/>
            <person name="Pasko D."/>
            <person name="Tonellato P.J."/>
            <person name="Twigger S."/>
            <person name="Ponting C.P."/>
            <person name="Duarte J.M."/>
            <person name="Rice S."/>
            <person name="Goodstadt L."/>
            <person name="Beatson S.A."/>
            <person name="Emes R.D."/>
            <person name="Winter E.E."/>
            <person name="Webber C."/>
            <person name="Brandt P."/>
            <person name="Nyakatura G."/>
            <person name="Adetobi M."/>
            <person name="Chiaromonte F."/>
            <person name="Elnitski L."/>
            <person name="Eswara P."/>
            <person name="Hardison R.C."/>
            <person name="Hou M."/>
            <person name="Kolbe D."/>
            <person name="Makova K."/>
            <person name="Miller W."/>
            <person name="Nekrutenko A."/>
            <person name="Riemer C."/>
            <person name="Schwartz S."/>
            <person name="Taylor J."/>
            <person name="Yang S."/>
            <person name="Zhang Y."/>
            <person name="Lindpaintner K."/>
            <person name="Andrews T.D."/>
            <person name="Caccamo M."/>
            <person name="Clamp M."/>
            <person name="Clarke L."/>
            <person name="Curwen V."/>
            <person name="Durbin R.M."/>
            <person name="Eyras E."/>
            <person name="Searle S.M."/>
            <person name="Cooper G.M."/>
            <person name="Batzoglou S."/>
            <person name="Brudno M."/>
            <person name="Sidow A."/>
            <person name="Stone E.A."/>
            <person name="Payseur B.A."/>
            <person name="Bourque G."/>
            <person name="Lopez-Otin C."/>
            <person name="Puente X.S."/>
            <person name="Chakrabarti K."/>
            <person name="Chatterji S."/>
            <person name="Dewey C."/>
            <person name="Pachter L."/>
            <person name="Bray N."/>
            <person name="Yap V.B."/>
            <person name="Caspi A."/>
            <person name="Tesler G."/>
            <person name="Pevzner P.A."/>
            <person name="Haussler D."/>
            <person name="Roskin K.M."/>
            <person name="Baertsch R."/>
            <person name="Clawson H."/>
            <person name="Furey T.S."/>
            <person name="Hinrichs A.S."/>
            <person name="Karolchik D."/>
            <person name="Kent W.J."/>
            <person name="Rosenbloom K.R."/>
            <person name="Trumbower H."/>
            <person name="Weirauch M."/>
            <person name="Cooper D.N."/>
            <person name="Stenson P.D."/>
            <person name="Ma B."/>
            <person name="Brent M."/>
            <person name="Arumugam M."/>
            <person name="Shteynberg D."/>
            <person name="Copley R.R."/>
            <person name="Taylor M.S."/>
            <person name="Riethman H."/>
            <person name="Mudunuri U."/>
            <person name="Peterson J."/>
            <person name="Guyer M."/>
            <person name="Felsenfeld A."/>
            <person name="Old S."/>
            <person name="Mockrin S."/>
            <person name="Collins F.S."/>
        </authorList>
    </citation>
    <scope>NUCLEOTIDE SEQUENCE [LARGE SCALE GENOMIC DNA]</scope>
    <source>
        <strain>Brown Norway</strain>
    </source>
</reference>
<reference key="2">
    <citation type="journal article" date="2004" name="Genome Res.">
        <title>The status, quality, and expansion of the NIH full-length cDNA project: the Mammalian Gene Collection (MGC).</title>
        <authorList>
            <consortium name="The MGC Project Team"/>
        </authorList>
    </citation>
    <scope>NUCLEOTIDE SEQUENCE [LARGE SCALE MRNA] OF 2-221</scope>
    <source>
        <tissue>Spleen</tissue>
    </source>
</reference>
<reference key="3">
    <citation type="journal article" date="2012" name="Nat. Commun.">
        <title>Quantitative maps of protein phosphorylation sites across 14 different rat organs and tissues.</title>
        <authorList>
            <person name="Lundby A."/>
            <person name="Secher A."/>
            <person name="Lage K."/>
            <person name="Nordsborg N.B."/>
            <person name="Dmytriyev A."/>
            <person name="Lundby C."/>
            <person name="Olsen J.V."/>
        </authorList>
    </citation>
    <scope>PHOSPHORYLATION [LARGE SCALE ANALYSIS] AT THR-137</scope>
    <scope>IDENTIFICATION BY MASS SPECTROMETRY [LARGE SCALE ANALYSIS]</scope>
</reference>
<evidence type="ECO:0000250" key="1">
    <source>
        <dbReference type="UniProtKB" id="Q96MW1"/>
    </source>
</evidence>
<evidence type="ECO:0000255" key="2"/>
<evidence type="ECO:0000256" key="3">
    <source>
        <dbReference type="SAM" id="MobiDB-lite"/>
    </source>
</evidence>
<evidence type="ECO:0000305" key="4"/>
<evidence type="ECO:0007744" key="5">
    <source>
    </source>
</evidence>
<comment type="similarity">
    <text evidence="4">Belongs to the CCDC43 family.</text>
</comment>
<sequence>MAAPSEVAAAVLGEGDGGGFGSWLDGRLEALGVDQAVYRAYILGVLQEEEEEEKLDALQGILSAFLEEDSLLDICKEIVERWSETRDVTTKVKKEDEVQAITTLIEKQAQIVVKPRVVSEEEKQRKAALLAQYADVTDEEDEADEKADPGASTANIGSDKSLFRNTNVEDVLNARKLERDSLRDESQRKKEQDKLQREKDKLAKQERKEKEKKRTQRGERKR</sequence>
<dbReference type="EMBL" id="AABR03073345">
    <property type="status" value="NOT_ANNOTATED_CDS"/>
    <property type="molecule type" value="Genomic_DNA"/>
</dbReference>
<dbReference type="EMBL" id="BC091255">
    <property type="protein sequence ID" value="AAH91255.1"/>
    <property type="molecule type" value="mRNA"/>
</dbReference>
<dbReference type="RefSeq" id="NP_001094198.1">
    <property type="nucleotide sequence ID" value="NM_001100728.1"/>
</dbReference>
<dbReference type="SMR" id="Q5BK07"/>
<dbReference type="FunCoup" id="Q5BK07">
    <property type="interactions" value="2493"/>
</dbReference>
<dbReference type="IntAct" id="Q5BK07">
    <property type="interactions" value="1"/>
</dbReference>
<dbReference type="STRING" id="10116.ENSRNOP00000003685"/>
<dbReference type="iPTMnet" id="Q5BK07"/>
<dbReference type="PhosphoSitePlus" id="Q5BK07"/>
<dbReference type="jPOST" id="Q5BK07"/>
<dbReference type="PaxDb" id="10116-ENSRNOP00000003685"/>
<dbReference type="GeneID" id="360637"/>
<dbReference type="KEGG" id="rno:360637"/>
<dbReference type="UCSC" id="RGD:1311929">
    <property type="organism name" value="rat"/>
</dbReference>
<dbReference type="AGR" id="RGD:1311929"/>
<dbReference type="CTD" id="124808"/>
<dbReference type="RGD" id="1311929">
    <property type="gene designation" value="Ccdc43"/>
</dbReference>
<dbReference type="VEuPathDB" id="HostDB:ENSRNOG00000002748"/>
<dbReference type="eggNOG" id="ENOG502RYDM">
    <property type="taxonomic scope" value="Eukaryota"/>
</dbReference>
<dbReference type="HOGENOM" id="CLU_079381_1_0_1"/>
<dbReference type="InParanoid" id="Q5BK07"/>
<dbReference type="OrthoDB" id="86277at9989"/>
<dbReference type="PhylomeDB" id="Q5BK07"/>
<dbReference type="TreeFam" id="TF324859"/>
<dbReference type="PRO" id="PR:Q5BK07"/>
<dbReference type="Proteomes" id="UP000002494">
    <property type="component" value="Chromosome 10"/>
</dbReference>
<dbReference type="Bgee" id="ENSRNOG00000002748">
    <property type="expression patterns" value="Expressed in quadriceps femoris and 20 other cell types or tissues"/>
</dbReference>
<dbReference type="InterPro" id="IPR037666">
    <property type="entry name" value="CCDC43"/>
</dbReference>
<dbReference type="PANTHER" id="PTHR31684">
    <property type="entry name" value="COILED-COIL DOMAIN-CONTAINING PROTEIN 43"/>
    <property type="match status" value="1"/>
</dbReference>
<dbReference type="PANTHER" id="PTHR31684:SF2">
    <property type="entry name" value="COILED-COIL DOMAIN-CONTAINING PROTEIN 43"/>
    <property type="match status" value="1"/>
</dbReference>
<feature type="chain" id="PRO_0000234502" description="Coiled-coil domain-containing protein 43">
    <location>
        <begin position="1"/>
        <end position="222"/>
    </location>
</feature>
<feature type="region of interest" description="Disordered" evidence="3">
    <location>
        <begin position="135"/>
        <end position="222"/>
    </location>
</feature>
<feature type="coiled-coil region" evidence="2">
    <location>
        <begin position="119"/>
        <end position="148"/>
    </location>
</feature>
<feature type="coiled-coil region" evidence="2">
    <location>
        <begin position="175"/>
        <end position="217"/>
    </location>
</feature>
<feature type="compositionally biased region" description="Acidic residues" evidence="3">
    <location>
        <begin position="136"/>
        <end position="145"/>
    </location>
</feature>
<feature type="compositionally biased region" description="Polar residues" evidence="3">
    <location>
        <begin position="152"/>
        <end position="168"/>
    </location>
</feature>
<feature type="compositionally biased region" description="Basic and acidic residues" evidence="3">
    <location>
        <begin position="172"/>
        <end position="209"/>
    </location>
</feature>
<feature type="compositionally biased region" description="Basic residues" evidence="3">
    <location>
        <begin position="210"/>
        <end position="222"/>
    </location>
</feature>
<feature type="modified residue" description="Phosphothreonine" evidence="5">
    <location>
        <position position="137"/>
    </location>
</feature>
<feature type="cross-link" description="Glycyl lysine isopeptide (Lys-Gly) (interchain with G-Cter in SUMO1)" evidence="1">
    <location>
        <position position="93"/>
    </location>
</feature>
<gene>
    <name type="primary">Ccdc43</name>
</gene>
<accession>Q5BK07</accession>
<name>CCD43_RAT</name>
<keyword id="KW-0175">Coiled coil</keyword>
<keyword id="KW-1017">Isopeptide bond</keyword>
<keyword id="KW-0597">Phosphoprotein</keyword>
<keyword id="KW-1185">Reference proteome</keyword>
<keyword id="KW-0832">Ubl conjugation</keyword>
<organism>
    <name type="scientific">Rattus norvegicus</name>
    <name type="common">Rat</name>
    <dbReference type="NCBI Taxonomy" id="10116"/>
    <lineage>
        <taxon>Eukaryota</taxon>
        <taxon>Metazoa</taxon>
        <taxon>Chordata</taxon>
        <taxon>Craniata</taxon>
        <taxon>Vertebrata</taxon>
        <taxon>Euteleostomi</taxon>
        <taxon>Mammalia</taxon>
        <taxon>Eutheria</taxon>
        <taxon>Euarchontoglires</taxon>
        <taxon>Glires</taxon>
        <taxon>Rodentia</taxon>
        <taxon>Myomorpha</taxon>
        <taxon>Muroidea</taxon>
        <taxon>Muridae</taxon>
        <taxon>Murinae</taxon>
        <taxon>Rattus</taxon>
    </lineage>
</organism>
<protein>
    <recommendedName>
        <fullName>Coiled-coil domain-containing protein 43</fullName>
    </recommendedName>
</protein>